<keyword id="KW-0223">Dioxygenase</keyword>
<keyword id="KW-0238">DNA-binding</keyword>
<keyword id="KW-0408">Iron</keyword>
<keyword id="KW-0479">Metal-binding</keyword>
<keyword id="KW-0539">Nucleus</keyword>
<keyword id="KW-0560">Oxidoreductase</keyword>
<protein>
    <recommendedName>
        <fullName>Thymine dioxygenase JBP1</fullName>
        <ecNumber evidence="3">1.14.11.6</ecNumber>
    </recommendedName>
    <alternativeName>
        <fullName>J-binding protein 1</fullName>
    </alternativeName>
    <alternativeName>
        <fullName>Thymidine hydroxylase JBP1</fullName>
    </alternativeName>
</protein>
<reference key="1">
    <citation type="journal article" date="1999" name="EMBO J.">
        <title>The modified base J is the target for a novel DNA-binding protein in kinetoplastid protozoans.</title>
        <authorList>
            <person name="Cross M."/>
            <person name="Kieft R."/>
            <person name="Sabatini R."/>
            <person name="Wilm M."/>
            <person name="de Kort M."/>
            <person name="van der Marel G.A."/>
            <person name="van Boom J.H."/>
            <person name="van Leeuwen F."/>
            <person name="Borst P."/>
        </authorList>
    </citation>
    <scope>NUCLEOTIDE SEQUENCE [GENOMIC DNA]</scope>
    <scope>DNA-BINDING</scope>
</reference>
<sequence>MEPKSKKVKQDIFNFPDGKDVPTTKEKAEAYVDALKAHPFYDNVHSVVDVYDSATLRDGKGRVIGVMLRKALPEHATTAASGLLSAAAVRTSLRSSMFGGESPLSGIAGYFDYRGSPVELKARKTAFTYEHEKKWPAVFPLVDYVSEIYKSVMPEHWAAQDSAIPDIVRIHGTPFSTLTINSRFRTASHTDAGDFDGGYSCIACIDGDFKGLALGFDDFHVNVPMQPRDVLVFDSHYFHSNSELEISCPTEEWRRLTCVFYYRSALGEPSSYAEYRRRLAAAQQDSTAQPVVSSVVEKPNGKNLYKPSTVFPIDPTPFAVVAQLHRLHHCAAKGLCVHELLAVPSSPLAVLLFGERLSCSDGIPLRAAEQKLKANADGASRGVTSSGGFSESDAVLTTAVEKSKYLERDHLSQCISAELLAMWVEARKHWLRLVATEWARMIATAPERTDFLWKNKSPMNTAFFDLCEVAKQVMLGLLDKETATPTEERHFWSVYAAHLHRACAERLMMPEEAMSLRKLNVKLKDFSFGGTRYFKDMPVEEQERRVARKASIEEARRRSTAAKDGEQRSNWLTNDAFDYQTEDCEVDYAGHGWAVPKQHAKTVTANVHQEAVAATTEAVRVLVVLPRPPSGDRGDAAVDLPKEVTTSAEWVRLMSSPAVRRVLAAKQRNLTLLPNCNVEAVSLNFAYHDSLPQKATFDFVVLQHVLSAMPEDAIATDYVSRMRSICTGCLFVVETDVQCRQYFTLHYPLRVQYDAVAPAFFQLLHRCSYGTPLARTRTKAEVEALFPFVCCARYKLQGSPMNTVVHLLALE</sequence>
<accession>Q9U6M2</accession>
<gene>
    <name type="primary">JBP1</name>
</gene>
<dbReference type="EC" id="1.14.11.6" evidence="3"/>
<dbReference type="EMBL" id="AF182400">
    <property type="protein sequence ID" value="AAF01742.1"/>
    <property type="molecule type" value="Genomic_DNA"/>
</dbReference>
<dbReference type="SMR" id="Q9U6M2"/>
<dbReference type="VEuPathDB" id="TriTrypDB:CFAC1_050026200"/>
<dbReference type="GO" id="GO:0005634">
    <property type="term" value="C:nucleus"/>
    <property type="evidence" value="ECO:0007669"/>
    <property type="project" value="UniProtKB-SubCell"/>
</dbReference>
<dbReference type="GO" id="GO:0003677">
    <property type="term" value="F:DNA binding"/>
    <property type="evidence" value="ECO:0007669"/>
    <property type="project" value="UniProtKB-KW"/>
</dbReference>
<dbReference type="GO" id="GO:0046872">
    <property type="term" value="F:metal ion binding"/>
    <property type="evidence" value="ECO:0007669"/>
    <property type="project" value="UniProtKB-KW"/>
</dbReference>
<dbReference type="GO" id="GO:0050341">
    <property type="term" value="F:thymine dioxygenase activity"/>
    <property type="evidence" value="ECO:0007669"/>
    <property type="project" value="UniProtKB-EC"/>
</dbReference>
<dbReference type="GO" id="GO:0070580">
    <property type="term" value="P:base J metabolic process"/>
    <property type="evidence" value="ECO:0007669"/>
    <property type="project" value="UniProtKB-ARBA"/>
</dbReference>
<dbReference type="Gene3D" id="3.60.130.30">
    <property type="match status" value="1"/>
</dbReference>
<dbReference type="Gene3D" id="1.20.120.1440">
    <property type="entry name" value="JBP1, DNA-binding domain"/>
    <property type="match status" value="1"/>
</dbReference>
<dbReference type="InterPro" id="IPR024779">
    <property type="entry name" value="2OGFeDO_JBP1/TET_oxygenase_dom"/>
</dbReference>
<dbReference type="InterPro" id="IPR041241">
    <property type="entry name" value="DB_JBP1"/>
</dbReference>
<dbReference type="InterPro" id="IPR043111">
    <property type="entry name" value="DB_JBP1_sf"/>
</dbReference>
<dbReference type="Pfam" id="PF18526">
    <property type="entry name" value="DB_JBP1"/>
    <property type="match status" value="1"/>
</dbReference>
<dbReference type="Pfam" id="PF12851">
    <property type="entry name" value="Tet_JBP"/>
    <property type="match status" value="1"/>
</dbReference>
<organism>
    <name type="scientific">Crithidia fasciculata</name>
    <dbReference type="NCBI Taxonomy" id="5656"/>
    <lineage>
        <taxon>Eukaryota</taxon>
        <taxon>Discoba</taxon>
        <taxon>Euglenozoa</taxon>
        <taxon>Kinetoplastea</taxon>
        <taxon>Metakinetoplastina</taxon>
        <taxon>Trypanosomatida</taxon>
        <taxon>Trypanosomatidae</taxon>
        <taxon>Leishmaniinae</taxon>
        <taxon>Crithidia</taxon>
    </lineage>
</organism>
<evidence type="ECO:0000250" key="1"/>
<evidence type="ECO:0000250" key="2">
    <source>
        <dbReference type="UniProtKB" id="Q6N021"/>
    </source>
</evidence>
<evidence type="ECO:0000250" key="3">
    <source>
        <dbReference type="UniProtKB" id="Q9U6M1"/>
    </source>
</evidence>
<evidence type="ECO:0000305" key="4"/>
<feature type="chain" id="PRO_0000377550" description="Thymine dioxygenase JBP1">
    <location>
        <begin position="1"/>
        <end position="811"/>
    </location>
</feature>
<feature type="region of interest" description="Thymine dioxygenase" evidence="3">
    <location>
        <begin position="62"/>
        <end position="264"/>
    </location>
</feature>
<feature type="region of interest" description="DNA-binding JBP1 domain" evidence="3">
    <location>
        <begin position="392"/>
        <end position="561"/>
    </location>
</feature>
<feature type="binding site" evidence="2">
    <location>
        <position position="189"/>
    </location>
    <ligand>
        <name>Fe cation</name>
        <dbReference type="ChEBI" id="CHEBI:24875"/>
        <note>catalytic</note>
    </ligand>
</feature>
<feature type="binding site" evidence="2">
    <location>
        <position position="191"/>
    </location>
    <ligand>
        <name>Fe cation</name>
        <dbReference type="ChEBI" id="CHEBI:24875"/>
        <note>catalytic</note>
    </ligand>
</feature>
<feature type="binding site" evidence="2">
    <location>
        <position position="239"/>
    </location>
    <ligand>
        <name>Fe cation</name>
        <dbReference type="ChEBI" id="CHEBI:24875"/>
        <note>catalytic</note>
    </ligand>
</feature>
<feature type="binding site" evidence="2">
    <location>
        <position position="255"/>
    </location>
    <ligand>
        <name>2-oxoglutarate</name>
        <dbReference type="ChEBI" id="CHEBI:16810"/>
    </ligand>
</feature>
<feature type="site" description="Involved in J base recognition, conferring specificity towards J-DNA" evidence="3">
    <location>
        <position position="525"/>
    </location>
</feature>
<proteinExistence type="evidence at protein level"/>
<comment type="function">
    <text evidence="3">Dioxygenase that catalyzes the first step of DNA base J (beta-d-glucosyl-HOMedU) biosynthesis by converting thymine to 5-hydroxymethyluracil (HOMedU). DNA base J is a hypermodified thymidine residue found in the genome of kinetoplastid parasites, which is localized primarily to repetitive DNA, namely the telomeres, and is implicated in the regulation of antigenic variation. Also specifically binds to base J-containing DNA (J-DNA). Involved in propagation and maintenance of DNA base J synthesis initiated by JBP2 by specifically binding already synthesized DNA base J and propagating J synthesis. Thymine dioxygenase activity and J-DNA-binding are independent functions (By similarity).</text>
</comment>
<comment type="catalytic activity">
    <reaction evidence="3">
        <text>thymine + 2-oxoglutarate + O2 = 5-hydroxymethyluracil + succinate + CO2</text>
        <dbReference type="Rhea" id="RHEA:10316"/>
        <dbReference type="ChEBI" id="CHEBI:15379"/>
        <dbReference type="ChEBI" id="CHEBI:16526"/>
        <dbReference type="ChEBI" id="CHEBI:16810"/>
        <dbReference type="ChEBI" id="CHEBI:16964"/>
        <dbReference type="ChEBI" id="CHEBI:17821"/>
        <dbReference type="ChEBI" id="CHEBI:30031"/>
        <dbReference type="EC" id="1.14.11.6"/>
    </reaction>
</comment>
<comment type="cofactor">
    <cofactor evidence="2">
        <name>Fe(2+)</name>
        <dbReference type="ChEBI" id="CHEBI:29033"/>
    </cofactor>
    <text evidence="2">Binds 1 Fe(2+) ion per subunit.</text>
</comment>
<comment type="subunit">
    <text evidence="3">Monomer. Binds to DNA as a monomer (By similarity).</text>
</comment>
<comment type="subcellular location">
    <subcellularLocation>
        <location evidence="1">Nucleus</location>
    </subcellularLocation>
</comment>
<comment type="domain">
    <text evidence="3">The DNA-binding JBP1 domain (DB-JBP1) is necessary and sufficient for binding to J-DNA.</text>
</comment>
<comment type="similarity">
    <text evidence="4">Belongs to the TET family. JBP1 subfamily.</text>
</comment>
<name>JBP1_CRIFA</name>